<keyword id="KW-0963">Cytoplasm</keyword>
<keyword id="KW-0647">Proteasome</keyword>
<feature type="chain" id="PRO_1000204864" description="Proteasome subunit alpha">
    <location>
        <begin position="1"/>
        <end position="241"/>
    </location>
</feature>
<reference key="1">
    <citation type="journal article" date="2009" name="Proc. Natl. Acad. Sci. U.S.A.">
        <title>Biogeography of the Sulfolobus islandicus pan-genome.</title>
        <authorList>
            <person name="Reno M.L."/>
            <person name="Held N.L."/>
            <person name="Fields C.J."/>
            <person name="Burke P.V."/>
            <person name="Whitaker R.J."/>
        </authorList>
    </citation>
    <scope>NUCLEOTIDE SEQUENCE [LARGE SCALE GENOMIC DNA]</scope>
    <source>
        <strain>Y.G.57.14 / Yellowstone #1</strain>
    </source>
</reference>
<protein>
    <recommendedName>
        <fullName evidence="1">Proteasome subunit alpha</fullName>
    </recommendedName>
    <alternativeName>
        <fullName evidence="1">20S proteasome alpha subunit</fullName>
    </alternativeName>
    <alternativeName>
        <fullName evidence="1">Proteasome core protein PsmA</fullName>
    </alternativeName>
</protein>
<dbReference type="EMBL" id="CP001403">
    <property type="protein sequence ID" value="ACP45665.1"/>
    <property type="molecule type" value="Genomic_DNA"/>
</dbReference>
<dbReference type="RefSeq" id="WP_012711401.1">
    <property type="nucleotide sequence ID" value="NC_012622.1"/>
</dbReference>
<dbReference type="SMR" id="C3NEC6"/>
<dbReference type="GeneID" id="84061723"/>
<dbReference type="KEGG" id="siy:YG5714_1398"/>
<dbReference type="HOGENOM" id="CLU_035750_4_1_2"/>
<dbReference type="Proteomes" id="UP000002308">
    <property type="component" value="Chromosome"/>
</dbReference>
<dbReference type="GO" id="GO:0005737">
    <property type="term" value="C:cytoplasm"/>
    <property type="evidence" value="ECO:0007669"/>
    <property type="project" value="UniProtKB-SubCell"/>
</dbReference>
<dbReference type="GO" id="GO:0019773">
    <property type="term" value="C:proteasome core complex, alpha-subunit complex"/>
    <property type="evidence" value="ECO:0000250"/>
    <property type="project" value="UniProtKB"/>
</dbReference>
<dbReference type="GO" id="GO:0004298">
    <property type="term" value="F:threonine-type endopeptidase activity"/>
    <property type="evidence" value="ECO:0007669"/>
    <property type="project" value="InterPro"/>
</dbReference>
<dbReference type="GO" id="GO:0010498">
    <property type="term" value="P:proteasomal protein catabolic process"/>
    <property type="evidence" value="ECO:0007669"/>
    <property type="project" value="UniProtKB-UniRule"/>
</dbReference>
<dbReference type="GO" id="GO:0006511">
    <property type="term" value="P:ubiquitin-dependent protein catabolic process"/>
    <property type="evidence" value="ECO:0007669"/>
    <property type="project" value="InterPro"/>
</dbReference>
<dbReference type="CDD" id="cd03756">
    <property type="entry name" value="proteasome_alpha_archeal"/>
    <property type="match status" value="1"/>
</dbReference>
<dbReference type="FunFam" id="3.60.20.10:FF:000004">
    <property type="entry name" value="Proteasome subunit alpha type-4"/>
    <property type="match status" value="1"/>
</dbReference>
<dbReference type="Gene3D" id="3.60.20.10">
    <property type="entry name" value="Glutamine Phosphoribosylpyrophosphate, subunit 1, domain 1"/>
    <property type="match status" value="1"/>
</dbReference>
<dbReference type="HAMAP" id="MF_00289_A">
    <property type="entry name" value="Proteasome_A_A"/>
    <property type="match status" value="1"/>
</dbReference>
<dbReference type="InterPro" id="IPR029055">
    <property type="entry name" value="Ntn_hydrolases_N"/>
</dbReference>
<dbReference type="InterPro" id="IPR050115">
    <property type="entry name" value="Proteasome_alpha"/>
</dbReference>
<dbReference type="InterPro" id="IPR023332">
    <property type="entry name" value="Proteasome_alpha-type"/>
</dbReference>
<dbReference type="InterPro" id="IPR019982">
    <property type="entry name" value="Proteasome_asu_arc"/>
</dbReference>
<dbReference type="InterPro" id="IPR000426">
    <property type="entry name" value="Proteasome_asu_N"/>
</dbReference>
<dbReference type="InterPro" id="IPR001353">
    <property type="entry name" value="Proteasome_sua/b"/>
</dbReference>
<dbReference type="NCBIfam" id="TIGR03633">
    <property type="entry name" value="arc_protsome_A"/>
    <property type="match status" value="1"/>
</dbReference>
<dbReference type="NCBIfam" id="NF003075">
    <property type="entry name" value="PRK03996.1"/>
    <property type="match status" value="1"/>
</dbReference>
<dbReference type="PANTHER" id="PTHR11599">
    <property type="entry name" value="PROTEASOME SUBUNIT ALPHA/BETA"/>
    <property type="match status" value="1"/>
</dbReference>
<dbReference type="Pfam" id="PF00227">
    <property type="entry name" value="Proteasome"/>
    <property type="match status" value="1"/>
</dbReference>
<dbReference type="Pfam" id="PF10584">
    <property type="entry name" value="Proteasome_A_N"/>
    <property type="match status" value="1"/>
</dbReference>
<dbReference type="SMART" id="SM00948">
    <property type="entry name" value="Proteasome_A_N"/>
    <property type="match status" value="1"/>
</dbReference>
<dbReference type="SUPFAM" id="SSF56235">
    <property type="entry name" value="N-terminal nucleophile aminohydrolases (Ntn hydrolases)"/>
    <property type="match status" value="1"/>
</dbReference>
<dbReference type="PROSITE" id="PS00388">
    <property type="entry name" value="PROTEASOME_ALPHA_1"/>
    <property type="match status" value="1"/>
</dbReference>
<dbReference type="PROSITE" id="PS51475">
    <property type="entry name" value="PROTEASOME_ALPHA_2"/>
    <property type="match status" value="1"/>
</dbReference>
<gene>
    <name evidence="1" type="primary">psmA</name>
    <name type="ordered locus">YG5714_1398</name>
</gene>
<organism>
    <name type="scientific">Saccharolobus islandicus (strain Y.G.57.14 / Yellowstone #1)</name>
    <name type="common">Sulfolobus islandicus</name>
    <dbReference type="NCBI Taxonomy" id="439386"/>
    <lineage>
        <taxon>Archaea</taxon>
        <taxon>Thermoproteota</taxon>
        <taxon>Thermoprotei</taxon>
        <taxon>Sulfolobales</taxon>
        <taxon>Sulfolobaceae</taxon>
        <taxon>Saccharolobus</taxon>
    </lineage>
</organism>
<evidence type="ECO:0000255" key="1">
    <source>
        <dbReference type="HAMAP-Rule" id="MF_00289"/>
    </source>
</evidence>
<proteinExistence type="inferred from homology"/>
<sequence>MAFGPAAMGYDRAITIFSPDGSLYQVDYAFEAVKKGWTAIGIKSKSGVVIASEKRKAQSLLDVDSIEKVFLIDDHVGCSFAGLASDGRVLIDYARNIALQHRLIYDEPVSIDYLTKSVADVKQMYTQHGGVRPFGVALVIAGIDKSVPKLYMTEPSGQYMPYQAVAIGQGYYTATEFLEKNYKEDLTIEDTILLALKALSATLKPNEKLTPNTVEIGYASTQTGLFLKMTSEDKNMYLQKL</sequence>
<comment type="function">
    <text evidence="1">Component of the proteasome core, a large protease complex with broad specificity involved in protein degradation.</text>
</comment>
<comment type="activity regulation">
    <text evidence="1">The formation of the proteasomal ATPase PAN-20S proteasome complex, via the docking of the C-termini of PAN into the intersubunit pockets in the alpha-rings, triggers opening of the gate for substrate entry. Interconversion between the open-gate and close-gate conformations leads to a dynamic regulation of the 20S proteasome proteolysis activity.</text>
</comment>
<comment type="subunit">
    <text evidence="1">The 20S proteasome core is composed of 14 alpha and 14 beta subunits that assemble into four stacked heptameric rings, resulting in a barrel-shaped structure. The two inner rings, each composed of seven catalytic beta subunits, are sandwiched by two outer rings, each composed of seven alpha subunits. The catalytic chamber with the active sites is on the inside of the barrel. Has a gated structure, the ends of the cylinder being occluded by the N-termini of the alpha-subunits. Is capped at one or both ends by the proteasome regulatory ATPase, PAN.</text>
</comment>
<comment type="subcellular location">
    <subcellularLocation>
        <location evidence="1">Cytoplasm</location>
    </subcellularLocation>
</comment>
<comment type="similarity">
    <text evidence="1">Belongs to the peptidase T1A family.</text>
</comment>
<name>PSA_SACI7</name>
<accession>C3NEC6</accession>